<feature type="chain" id="PRO_0000134190" description="Small ribosomal subunit protein uS2">
    <location>
        <begin position="1"/>
        <end position="249"/>
    </location>
</feature>
<keyword id="KW-0002">3D-structure</keyword>
<keyword id="KW-0687">Ribonucleoprotein</keyword>
<keyword id="KW-0689">Ribosomal protein</keyword>
<proteinExistence type="evidence at protein level"/>
<protein>
    <recommendedName>
        <fullName evidence="1">Small ribosomal subunit protein uS2</fullName>
    </recommendedName>
    <alternativeName>
        <fullName evidence="2">30S ribosomal protein S2</fullName>
    </alternativeName>
</protein>
<dbReference type="EMBL" id="AL596169">
    <property type="protein sequence ID" value="CAC96998.1"/>
    <property type="molecule type" value="Genomic_DNA"/>
</dbReference>
<dbReference type="PIR" id="AF1653">
    <property type="entry name" value="AF1653"/>
</dbReference>
<dbReference type="RefSeq" id="WP_003772143.1">
    <property type="nucleotide sequence ID" value="NC_003212.1"/>
</dbReference>
<dbReference type="PDB" id="8UU9">
    <property type="method" value="EM"/>
    <property type="resolution" value="3.10 A"/>
    <property type="chains" value="b=1-249"/>
</dbReference>
<dbReference type="PDBsum" id="8UU9"/>
<dbReference type="EMDB" id="EMD-42576"/>
<dbReference type="SMR" id="Q92B01"/>
<dbReference type="STRING" id="272626.gene:17566098"/>
<dbReference type="GeneID" id="93235080"/>
<dbReference type="KEGG" id="lin:rpsB"/>
<dbReference type="eggNOG" id="COG0052">
    <property type="taxonomic scope" value="Bacteria"/>
</dbReference>
<dbReference type="HOGENOM" id="CLU_040318_1_2_9"/>
<dbReference type="OrthoDB" id="9808036at2"/>
<dbReference type="Proteomes" id="UP000002513">
    <property type="component" value="Chromosome"/>
</dbReference>
<dbReference type="GO" id="GO:0022627">
    <property type="term" value="C:cytosolic small ribosomal subunit"/>
    <property type="evidence" value="ECO:0007669"/>
    <property type="project" value="TreeGrafter"/>
</dbReference>
<dbReference type="GO" id="GO:0003735">
    <property type="term" value="F:structural constituent of ribosome"/>
    <property type="evidence" value="ECO:0007669"/>
    <property type="project" value="InterPro"/>
</dbReference>
<dbReference type="GO" id="GO:0006412">
    <property type="term" value="P:translation"/>
    <property type="evidence" value="ECO:0007669"/>
    <property type="project" value="UniProtKB-UniRule"/>
</dbReference>
<dbReference type="CDD" id="cd01425">
    <property type="entry name" value="RPS2"/>
    <property type="match status" value="1"/>
</dbReference>
<dbReference type="FunFam" id="1.10.287.610:FF:000001">
    <property type="entry name" value="30S ribosomal protein S2"/>
    <property type="match status" value="1"/>
</dbReference>
<dbReference type="Gene3D" id="3.40.50.10490">
    <property type="entry name" value="Glucose-6-phosphate isomerase like protein, domain 1"/>
    <property type="match status" value="1"/>
</dbReference>
<dbReference type="Gene3D" id="1.10.287.610">
    <property type="entry name" value="Helix hairpin bin"/>
    <property type="match status" value="1"/>
</dbReference>
<dbReference type="HAMAP" id="MF_00291_B">
    <property type="entry name" value="Ribosomal_uS2_B"/>
    <property type="match status" value="1"/>
</dbReference>
<dbReference type="InterPro" id="IPR001865">
    <property type="entry name" value="Ribosomal_uS2"/>
</dbReference>
<dbReference type="InterPro" id="IPR005706">
    <property type="entry name" value="Ribosomal_uS2_bac/mit/plastid"/>
</dbReference>
<dbReference type="InterPro" id="IPR018130">
    <property type="entry name" value="Ribosomal_uS2_CS"/>
</dbReference>
<dbReference type="InterPro" id="IPR023591">
    <property type="entry name" value="Ribosomal_uS2_flav_dom_sf"/>
</dbReference>
<dbReference type="NCBIfam" id="TIGR01011">
    <property type="entry name" value="rpsB_bact"/>
    <property type="match status" value="1"/>
</dbReference>
<dbReference type="PANTHER" id="PTHR12534">
    <property type="entry name" value="30S RIBOSOMAL PROTEIN S2 PROKARYOTIC AND ORGANELLAR"/>
    <property type="match status" value="1"/>
</dbReference>
<dbReference type="PANTHER" id="PTHR12534:SF0">
    <property type="entry name" value="SMALL RIBOSOMAL SUBUNIT PROTEIN US2M"/>
    <property type="match status" value="1"/>
</dbReference>
<dbReference type="Pfam" id="PF00318">
    <property type="entry name" value="Ribosomal_S2"/>
    <property type="match status" value="1"/>
</dbReference>
<dbReference type="PRINTS" id="PR00395">
    <property type="entry name" value="RIBOSOMALS2"/>
</dbReference>
<dbReference type="SUPFAM" id="SSF52313">
    <property type="entry name" value="Ribosomal protein S2"/>
    <property type="match status" value="1"/>
</dbReference>
<dbReference type="PROSITE" id="PS00962">
    <property type="entry name" value="RIBOSOMAL_S2_1"/>
    <property type="match status" value="1"/>
</dbReference>
<dbReference type="PROSITE" id="PS00963">
    <property type="entry name" value="RIBOSOMAL_S2_2"/>
    <property type="match status" value="1"/>
</dbReference>
<accession>Q92B01</accession>
<reference key="1">
    <citation type="journal article" date="2001" name="Science">
        <title>Comparative genomics of Listeria species.</title>
        <authorList>
            <person name="Glaser P."/>
            <person name="Frangeul L."/>
            <person name="Buchrieser C."/>
            <person name="Rusniok C."/>
            <person name="Amend A."/>
            <person name="Baquero F."/>
            <person name="Berche P."/>
            <person name="Bloecker H."/>
            <person name="Brandt P."/>
            <person name="Chakraborty T."/>
            <person name="Charbit A."/>
            <person name="Chetouani F."/>
            <person name="Couve E."/>
            <person name="de Daruvar A."/>
            <person name="Dehoux P."/>
            <person name="Domann E."/>
            <person name="Dominguez-Bernal G."/>
            <person name="Duchaud E."/>
            <person name="Durant L."/>
            <person name="Dussurget O."/>
            <person name="Entian K.-D."/>
            <person name="Fsihi H."/>
            <person name="Garcia-del Portillo F."/>
            <person name="Garrido P."/>
            <person name="Gautier L."/>
            <person name="Goebel W."/>
            <person name="Gomez-Lopez N."/>
            <person name="Hain T."/>
            <person name="Hauf J."/>
            <person name="Jackson D."/>
            <person name="Jones L.-M."/>
            <person name="Kaerst U."/>
            <person name="Kreft J."/>
            <person name="Kuhn M."/>
            <person name="Kunst F."/>
            <person name="Kurapkat G."/>
            <person name="Madueno E."/>
            <person name="Maitournam A."/>
            <person name="Mata Vicente J."/>
            <person name="Ng E."/>
            <person name="Nedjari H."/>
            <person name="Nordsiek G."/>
            <person name="Novella S."/>
            <person name="de Pablos B."/>
            <person name="Perez-Diaz J.-C."/>
            <person name="Purcell R."/>
            <person name="Remmel B."/>
            <person name="Rose M."/>
            <person name="Schlueter T."/>
            <person name="Simoes N."/>
            <person name="Tierrez A."/>
            <person name="Vazquez-Boland J.-A."/>
            <person name="Voss H."/>
            <person name="Wehland J."/>
            <person name="Cossart P."/>
        </authorList>
    </citation>
    <scope>NUCLEOTIDE SEQUENCE [LARGE SCALE GENOMIC DNA]</scope>
    <source>
        <strain>ATCC BAA-680 / CLIP 11262</strain>
    </source>
</reference>
<gene>
    <name evidence="1" type="primary">rpsB</name>
    <name type="ordered locus">lin1767</name>
</gene>
<name>RS2_LISIN</name>
<comment type="similarity">
    <text evidence="1">Belongs to the universal ribosomal protein uS2 family.</text>
</comment>
<evidence type="ECO:0000255" key="1">
    <source>
        <dbReference type="HAMAP-Rule" id="MF_00291"/>
    </source>
</evidence>
<evidence type="ECO:0000305" key="2"/>
<organism>
    <name type="scientific">Listeria innocua serovar 6a (strain ATCC BAA-680 / CLIP 11262)</name>
    <dbReference type="NCBI Taxonomy" id="272626"/>
    <lineage>
        <taxon>Bacteria</taxon>
        <taxon>Bacillati</taxon>
        <taxon>Bacillota</taxon>
        <taxon>Bacilli</taxon>
        <taxon>Bacillales</taxon>
        <taxon>Listeriaceae</taxon>
        <taxon>Listeria</taxon>
    </lineage>
</organism>
<sequence>MPVISMKQLLEAGVHFGHQTRRWNPKMKKYIFTERNGIYIIDLQKTVKKVDEAFNFMREVASDNGTILFVGTKKQAQESVRDEAIRSGQYFVNHRWLGGTLTNFETIQKRIQHLKKIEKMEADGTFEVLPKKEVVLLKKEQEKLERFLGGIKDMKGLPDALFIVDPRKERIAVAEARKLHIPIIGIVDTNCDPDEIDYVIPANDDAIRAVKLLTAKMADAIIEVNQGEELTEAEVAPVEEKAAEETTEA</sequence>